<name>V061_FOWPN</name>
<organism>
    <name type="scientific">Fowlpox virus (strain NVSL)</name>
    <name type="common">FPV</name>
    <dbReference type="NCBI Taxonomy" id="928301"/>
    <lineage>
        <taxon>Viruses</taxon>
        <taxon>Varidnaviria</taxon>
        <taxon>Bamfordvirae</taxon>
        <taxon>Nucleocytoviricota</taxon>
        <taxon>Pokkesviricetes</taxon>
        <taxon>Chitovirales</taxon>
        <taxon>Poxviridae</taxon>
        <taxon>Chordopoxvirinae</taxon>
        <taxon>Avipoxvirus</taxon>
        <taxon>Fowlpox virus</taxon>
    </lineage>
</organism>
<dbReference type="EMBL" id="X17202">
    <property type="protein sequence ID" value="CAA35065.1"/>
    <property type="molecule type" value="Genomic_DNA"/>
</dbReference>
<dbReference type="EMBL" id="AF198100">
    <property type="protein sequence ID" value="AAF44405.1"/>
    <property type="molecule type" value="Genomic_DNA"/>
</dbReference>
<dbReference type="PIR" id="B35216">
    <property type="entry name" value="B35216"/>
</dbReference>
<dbReference type="RefSeq" id="NP_039024.1">
    <property type="nucleotide sequence ID" value="NC_002188.1"/>
</dbReference>
<dbReference type="SMR" id="P21972"/>
<dbReference type="GeneID" id="1486609"/>
<dbReference type="KEGG" id="vg:1486609"/>
<dbReference type="Proteomes" id="UP000008597">
    <property type="component" value="Segment"/>
</dbReference>
<dbReference type="GO" id="GO:0005615">
    <property type="term" value="C:extracellular space"/>
    <property type="evidence" value="ECO:0007669"/>
    <property type="project" value="UniProtKB-KW"/>
</dbReference>
<dbReference type="GO" id="GO:0008009">
    <property type="term" value="F:chemokine activity"/>
    <property type="evidence" value="ECO:0007669"/>
    <property type="project" value="InterPro"/>
</dbReference>
<dbReference type="GO" id="GO:0006955">
    <property type="term" value="P:immune response"/>
    <property type="evidence" value="ECO:0007669"/>
    <property type="project" value="InterPro"/>
</dbReference>
<dbReference type="InterPro" id="IPR036048">
    <property type="entry name" value="Interleukin_8-like_sf"/>
</dbReference>
<dbReference type="SUPFAM" id="SSF54117">
    <property type="entry name" value="Interleukin 8-like chemokines"/>
    <property type="match status" value="1"/>
</dbReference>
<evidence type="ECO:0000305" key="1"/>
<accession>P21972</accession>
<protein>
    <recommendedName>
        <fullName>Putative CC-type chemokine FPV061</fullName>
    </recommendedName>
</protein>
<organismHost>
    <name type="scientific">Vertebrata</name>
    <dbReference type="NCBI Taxonomy" id="7742"/>
</organismHost>
<proteinExistence type="inferred from homology"/>
<feature type="chain" id="PRO_0000144306" description="Putative CC-type chemokine FPV061">
    <location>
        <begin position="1"/>
        <end position="129"/>
    </location>
</feature>
<reference key="1">
    <citation type="journal article" date="1990" name="J. Gen. Virol.">
        <title>Nucleotide sequence analysis of a 10.5 kbp HindIII fragment of fowlpox virus: relatedness to the central portion of the vaccinia virus HindIII D region.</title>
        <authorList>
            <person name="Tartaglia J."/>
            <person name="Winslow J."/>
            <person name="Goebel S.J."/>
            <person name="Johnson G.P."/>
            <person name="Taylor J."/>
            <person name="Paoletti E."/>
        </authorList>
    </citation>
    <scope>NUCLEOTIDE SEQUENCE [GENOMIC DNA]</scope>
    <source>
        <strain>FP-1</strain>
    </source>
</reference>
<reference key="2">
    <citation type="journal article" date="2000" name="J. Virol.">
        <title>The genome of fowlpox virus.</title>
        <authorList>
            <person name="Afonso C.L."/>
            <person name="Tulman E.R."/>
            <person name="Lu Z."/>
            <person name="Zsak L."/>
            <person name="Kutish G.F."/>
            <person name="Rock D.L."/>
        </authorList>
    </citation>
    <scope>NUCLEOTIDE SEQUENCE [LARGE SCALE GENOMIC DNA]</scope>
</reference>
<sequence length="129" mass="14110">MQSNISIYVLTVIGSCFYNPFILTYECRDDCCNGRYGPVPAPWKVLNCTKTGPGCPDSGYLLTTSENKTYCITGNETDKGNYPQTIGAIFPNCSGMNVGAGRLITRMLEEYPRGKSPSNNSINNIKISC</sequence>
<keyword id="KW-0202">Cytokine</keyword>
<keyword id="KW-1185">Reference proteome</keyword>
<gene>
    <name type="ordered locus">FPV061</name>
    <name type="ORF">FP14</name>
</gene>
<comment type="similarity">
    <text evidence="1">Belongs to the intercrine beta (chemokine CC) family. Highly divergent.</text>
</comment>